<sequence>MKIALIAHDEKKAEMVAFATAYAPVLANHELYATGTTGLRIQEATGLAVHRFQSGPYGGDQEIGAMIARNEMDLVIFFRDPLTAQPHEPDISALMRLCDVYAVPLATNIGTAELLIRGLERGDLAWRNIVHGRAKSGEEKETER</sequence>
<gene>
    <name evidence="1" type="primary">mgsA</name>
    <name type="ordered locus">GTNG_2118</name>
</gene>
<feature type="chain" id="PRO_1000017809" description="Methylglyoxal synthase">
    <location>
        <begin position="1"/>
        <end position="144"/>
    </location>
</feature>
<feature type="domain" description="MGS-like" evidence="1">
    <location>
        <begin position="1"/>
        <end position="144"/>
    </location>
</feature>
<feature type="active site" description="Proton donor/acceptor" evidence="1">
    <location>
        <position position="60"/>
    </location>
</feature>
<feature type="binding site" evidence="1">
    <location>
        <position position="8"/>
    </location>
    <ligand>
        <name>substrate</name>
    </ligand>
</feature>
<feature type="binding site" evidence="1">
    <location>
        <position position="12"/>
    </location>
    <ligand>
        <name>substrate</name>
    </ligand>
</feature>
<feature type="binding site" evidence="1">
    <location>
        <begin position="34"/>
        <end position="37"/>
    </location>
    <ligand>
        <name>substrate</name>
    </ligand>
</feature>
<feature type="binding site" evidence="1">
    <location>
        <begin position="54"/>
        <end position="55"/>
    </location>
    <ligand>
        <name>substrate</name>
    </ligand>
</feature>
<feature type="binding site" evidence="1">
    <location>
        <position position="87"/>
    </location>
    <ligand>
        <name>substrate</name>
    </ligand>
</feature>
<reference key="1">
    <citation type="journal article" date="2007" name="Proc. Natl. Acad. Sci. U.S.A.">
        <title>Genome and proteome of long-chain alkane degrading Geobacillus thermodenitrificans NG80-2 isolated from a deep-subsurface oil reservoir.</title>
        <authorList>
            <person name="Feng L."/>
            <person name="Wang W."/>
            <person name="Cheng J."/>
            <person name="Ren Y."/>
            <person name="Zhao G."/>
            <person name="Gao C."/>
            <person name="Tang Y."/>
            <person name="Liu X."/>
            <person name="Han W."/>
            <person name="Peng X."/>
            <person name="Liu R."/>
            <person name="Wang L."/>
        </authorList>
    </citation>
    <scope>NUCLEOTIDE SEQUENCE [LARGE SCALE GENOMIC DNA]</scope>
    <source>
        <strain>NG80-2</strain>
    </source>
</reference>
<dbReference type="EC" id="4.2.3.3" evidence="1"/>
<dbReference type="EMBL" id="CP000557">
    <property type="protein sequence ID" value="ABO67470.1"/>
    <property type="molecule type" value="Genomic_DNA"/>
</dbReference>
<dbReference type="RefSeq" id="WP_008879592.1">
    <property type="nucleotide sequence ID" value="NC_009328.1"/>
</dbReference>
<dbReference type="SMR" id="A4IQ66"/>
<dbReference type="GeneID" id="87623782"/>
<dbReference type="KEGG" id="gtn:GTNG_2118"/>
<dbReference type="eggNOG" id="COG1803">
    <property type="taxonomic scope" value="Bacteria"/>
</dbReference>
<dbReference type="HOGENOM" id="CLU_120420_1_0_9"/>
<dbReference type="Proteomes" id="UP000001578">
    <property type="component" value="Chromosome"/>
</dbReference>
<dbReference type="GO" id="GO:0005829">
    <property type="term" value="C:cytosol"/>
    <property type="evidence" value="ECO:0007669"/>
    <property type="project" value="TreeGrafter"/>
</dbReference>
<dbReference type="GO" id="GO:0008929">
    <property type="term" value="F:methylglyoxal synthase activity"/>
    <property type="evidence" value="ECO:0007669"/>
    <property type="project" value="UniProtKB-UniRule"/>
</dbReference>
<dbReference type="GO" id="GO:0019242">
    <property type="term" value="P:methylglyoxal biosynthetic process"/>
    <property type="evidence" value="ECO:0007669"/>
    <property type="project" value="UniProtKB-UniRule"/>
</dbReference>
<dbReference type="CDD" id="cd01422">
    <property type="entry name" value="MGS"/>
    <property type="match status" value="1"/>
</dbReference>
<dbReference type="FunFam" id="3.40.50.1380:FF:000006">
    <property type="entry name" value="Methylglyoxal synthase"/>
    <property type="match status" value="1"/>
</dbReference>
<dbReference type="Gene3D" id="3.40.50.1380">
    <property type="entry name" value="Methylglyoxal synthase-like domain"/>
    <property type="match status" value="1"/>
</dbReference>
<dbReference type="HAMAP" id="MF_00549">
    <property type="entry name" value="Methylglyoxal_synth"/>
    <property type="match status" value="1"/>
</dbReference>
<dbReference type="InterPro" id="IPR004363">
    <property type="entry name" value="Methylgl_synth"/>
</dbReference>
<dbReference type="InterPro" id="IPR018148">
    <property type="entry name" value="Methylglyoxal_synth_AS"/>
</dbReference>
<dbReference type="InterPro" id="IPR011607">
    <property type="entry name" value="MGS-like_dom"/>
</dbReference>
<dbReference type="InterPro" id="IPR036914">
    <property type="entry name" value="MGS-like_dom_sf"/>
</dbReference>
<dbReference type="NCBIfam" id="TIGR00160">
    <property type="entry name" value="MGSA"/>
    <property type="match status" value="1"/>
</dbReference>
<dbReference type="NCBIfam" id="NF003559">
    <property type="entry name" value="PRK05234.1"/>
    <property type="match status" value="1"/>
</dbReference>
<dbReference type="PANTHER" id="PTHR30492">
    <property type="entry name" value="METHYLGLYOXAL SYNTHASE"/>
    <property type="match status" value="1"/>
</dbReference>
<dbReference type="PANTHER" id="PTHR30492:SF0">
    <property type="entry name" value="METHYLGLYOXAL SYNTHASE"/>
    <property type="match status" value="1"/>
</dbReference>
<dbReference type="Pfam" id="PF02142">
    <property type="entry name" value="MGS"/>
    <property type="match status" value="1"/>
</dbReference>
<dbReference type="PIRSF" id="PIRSF006614">
    <property type="entry name" value="Methylglyox_syn"/>
    <property type="match status" value="1"/>
</dbReference>
<dbReference type="SMART" id="SM00851">
    <property type="entry name" value="MGS"/>
    <property type="match status" value="1"/>
</dbReference>
<dbReference type="SUPFAM" id="SSF52335">
    <property type="entry name" value="Methylglyoxal synthase-like"/>
    <property type="match status" value="1"/>
</dbReference>
<dbReference type="PROSITE" id="PS01335">
    <property type="entry name" value="METHYLGLYOXAL_SYNTH"/>
    <property type="match status" value="1"/>
</dbReference>
<dbReference type="PROSITE" id="PS51855">
    <property type="entry name" value="MGS"/>
    <property type="match status" value="1"/>
</dbReference>
<proteinExistence type="inferred from homology"/>
<name>MGSA_GEOTN</name>
<protein>
    <recommendedName>
        <fullName evidence="1">Methylglyoxal synthase</fullName>
        <shortName evidence="1">MGS</shortName>
        <ecNumber evidence="1">4.2.3.3</ecNumber>
    </recommendedName>
</protein>
<accession>A4IQ66</accession>
<evidence type="ECO:0000255" key="1">
    <source>
        <dbReference type="HAMAP-Rule" id="MF_00549"/>
    </source>
</evidence>
<keyword id="KW-0456">Lyase</keyword>
<organism>
    <name type="scientific">Geobacillus thermodenitrificans (strain NG80-2)</name>
    <dbReference type="NCBI Taxonomy" id="420246"/>
    <lineage>
        <taxon>Bacteria</taxon>
        <taxon>Bacillati</taxon>
        <taxon>Bacillota</taxon>
        <taxon>Bacilli</taxon>
        <taxon>Bacillales</taxon>
        <taxon>Anoxybacillaceae</taxon>
        <taxon>Geobacillus</taxon>
    </lineage>
</organism>
<comment type="function">
    <text evidence="1">Catalyzes the formation of methylglyoxal from dihydroxyacetone phosphate.</text>
</comment>
<comment type="catalytic activity">
    <reaction evidence="1">
        <text>dihydroxyacetone phosphate = methylglyoxal + phosphate</text>
        <dbReference type="Rhea" id="RHEA:17937"/>
        <dbReference type="ChEBI" id="CHEBI:17158"/>
        <dbReference type="ChEBI" id="CHEBI:43474"/>
        <dbReference type="ChEBI" id="CHEBI:57642"/>
        <dbReference type="EC" id="4.2.3.3"/>
    </reaction>
</comment>
<comment type="similarity">
    <text evidence="1">Belongs to the methylglyoxal synthase family.</text>
</comment>